<reference key="1">
    <citation type="journal article" date="2004" name="Nature">
        <title>Genome sequence of the Brown Norway rat yields insights into mammalian evolution.</title>
        <authorList>
            <person name="Gibbs R.A."/>
            <person name="Weinstock G.M."/>
            <person name="Metzker M.L."/>
            <person name="Muzny D.M."/>
            <person name="Sodergren E.J."/>
            <person name="Scherer S."/>
            <person name="Scott G."/>
            <person name="Steffen D."/>
            <person name="Worley K.C."/>
            <person name="Burch P.E."/>
            <person name="Okwuonu G."/>
            <person name="Hines S."/>
            <person name="Lewis L."/>
            <person name="Deramo C."/>
            <person name="Delgado O."/>
            <person name="Dugan-Rocha S."/>
            <person name="Miner G."/>
            <person name="Morgan M."/>
            <person name="Hawes A."/>
            <person name="Gill R."/>
            <person name="Holt R.A."/>
            <person name="Adams M.D."/>
            <person name="Amanatides P.G."/>
            <person name="Baden-Tillson H."/>
            <person name="Barnstead M."/>
            <person name="Chin S."/>
            <person name="Evans C.A."/>
            <person name="Ferriera S."/>
            <person name="Fosler C."/>
            <person name="Glodek A."/>
            <person name="Gu Z."/>
            <person name="Jennings D."/>
            <person name="Kraft C.L."/>
            <person name="Nguyen T."/>
            <person name="Pfannkoch C.M."/>
            <person name="Sitter C."/>
            <person name="Sutton G.G."/>
            <person name="Venter J.C."/>
            <person name="Woodage T."/>
            <person name="Smith D."/>
            <person name="Lee H.-M."/>
            <person name="Gustafson E."/>
            <person name="Cahill P."/>
            <person name="Kana A."/>
            <person name="Doucette-Stamm L."/>
            <person name="Weinstock K."/>
            <person name="Fechtel K."/>
            <person name="Weiss R.B."/>
            <person name="Dunn D.M."/>
            <person name="Green E.D."/>
            <person name="Blakesley R.W."/>
            <person name="Bouffard G.G."/>
            <person name="De Jong P.J."/>
            <person name="Osoegawa K."/>
            <person name="Zhu B."/>
            <person name="Marra M."/>
            <person name="Schein J."/>
            <person name="Bosdet I."/>
            <person name="Fjell C."/>
            <person name="Jones S."/>
            <person name="Krzywinski M."/>
            <person name="Mathewson C."/>
            <person name="Siddiqui A."/>
            <person name="Wye N."/>
            <person name="McPherson J."/>
            <person name="Zhao S."/>
            <person name="Fraser C.M."/>
            <person name="Shetty J."/>
            <person name="Shatsman S."/>
            <person name="Geer K."/>
            <person name="Chen Y."/>
            <person name="Abramzon S."/>
            <person name="Nierman W.C."/>
            <person name="Havlak P.H."/>
            <person name="Chen R."/>
            <person name="Durbin K.J."/>
            <person name="Egan A."/>
            <person name="Ren Y."/>
            <person name="Song X.-Z."/>
            <person name="Li B."/>
            <person name="Liu Y."/>
            <person name="Qin X."/>
            <person name="Cawley S."/>
            <person name="Cooney A.J."/>
            <person name="D'Souza L.M."/>
            <person name="Martin K."/>
            <person name="Wu J.Q."/>
            <person name="Gonzalez-Garay M.L."/>
            <person name="Jackson A.R."/>
            <person name="Kalafus K.J."/>
            <person name="McLeod M.P."/>
            <person name="Milosavljevic A."/>
            <person name="Virk D."/>
            <person name="Volkov A."/>
            <person name="Wheeler D.A."/>
            <person name="Zhang Z."/>
            <person name="Bailey J.A."/>
            <person name="Eichler E.E."/>
            <person name="Tuzun E."/>
            <person name="Birney E."/>
            <person name="Mongin E."/>
            <person name="Ureta-Vidal A."/>
            <person name="Woodwark C."/>
            <person name="Zdobnov E."/>
            <person name="Bork P."/>
            <person name="Suyama M."/>
            <person name="Torrents D."/>
            <person name="Alexandersson M."/>
            <person name="Trask B.J."/>
            <person name="Young J.M."/>
            <person name="Huang H."/>
            <person name="Wang H."/>
            <person name="Xing H."/>
            <person name="Daniels S."/>
            <person name="Gietzen D."/>
            <person name="Schmidt J."/>
            <person name="Stevens K."/>
            <person name="Vitt U."/>
            <person name="Wingrove J."/>
            <person name="Camara F."/>
            <person name="Mar Alba M."/>
            <person name="Abril J.F."/>
            <person name="Guigo R."/>
            <person name="Smit A."/>
            <person name="Dubchak I."/>
            <person name="Rubin E.M."/>
            <person name="Couronne O."/>
            <person name="Poliakov A."/>
            <person name="Huebner N."/>
            <person name="Ganten D."/>
            <person name="Goesele C."/>
            <person name="Hummel O."/>
            <person name="Kreitler T."/>
            <person name="Lee Y.-A."/>
            <person name="Monti J."/>
            <person name="Schulz H."/>
            <person name="Zimdahl H."/>
            <person name="Himmelbauer H."/>
            <person name="Lehrach H."/>
            <person name="Jacob H.J."/>
            <person name="Bromberg S."/>
            <person name="Gullings-Handley J."/>
            <person name="Jensen-Seaman M.I."/>
            <person name="Kwitek A.E."/>
            <person name="Lazar J."/>
            <person name="Pasko D."/>
            <person name="Tonellato P.J."/>
            <person name="Twigger S."/>
            <person name="Ponting C.P."/>
            <person name="Duarte J.M."/>
            <person name="Rice S."/>
            <person name="Goodstadt L."/>
            <person name="Beatson S.A."/>
            <person name="Emes R.D."/>
            <person name="Winter E.E."/>
            <person name="Webber C."/>
            <person name="Brandt P."/>
            <person name="Nyakatura G."/>
            <person name="Adetobi M."/>
            <person name="Chiaromonte F."/>
            <person name="Elnitski L."/>
            <person name="Eswara P."/>
            <person name="Hardison R.C."/>
            <person name="Hou M."/>
            <person name="Kolbe D."/>
            <person name="Makova K."/>
            <person name="Miller W."/>
            <person name="Nekrutenko A."/>
            <person name="Riemer C."/>
            <person name="Schwartz S."/>
            <person name="Taylor J."/>
            <person name="Yang S."/>
            <person name="Zhang Y."/>
            <person name="Lindpaintner K."/>
            <person name="Andrews T.D."/>
            <person name="Caccamo M."/>
            <person name="Clamp M."/>
            <person name="Clarke L."/>
            <person name="Curwen V."/>
            <person name="Durbin R.M."/>
            <person name="Eyras E."/>
            <person name="Searle S.M."/>
            <person name="Cooper G.M."/>
            <person name="Batzoglou S."/>
            <person name="Brudno M."/>
            <person name="Sidow A."/>
            <person name="Stone E.A."/>
            <person name="Payseur B.A."/>
            <person name="Bourque G."/>
            <person name="Lopez-Otin C."/>
            <person name="Puente X.S."/>
            <person name="Chakrabarti K."/>
            <person name="Chatterji S."/>
            <person name="Dewey C."/>
            <person name="Pachter L."/>
            <person name="Bray N."/>
            <person name="Yap V.B."/>
            <person name="Caspi A."/>
            <person name="Tesler G."/>
            <person name="Pevzner P.A."/>
            <person name="Haussler D."/>
            <person name="Roskin K.M."/>
            <person name="Baertsch R."/>
            <person name="Clawson H."/>
            <person name="Furey T.S."/>
            <person name="Hinrichs A.S."/>
            <person name="Karolchik D."/>
            <person name="Kent W.J."/>
            <person name="Rosenbloom K.R."/>
            <person name="Trumbower H."/>
            <person name="Weirauch M."/>
            <person name="Cooper D.N."/>
            <person name="Stenson P.D."/>
            <person name="Ma B."/>
            <person name="Brent M."/>
            <person name="Arumugam M."/>
            <person name="Shteynberg D."/>
            <person name="Copley R.R."/>
            <person name="Taylor M.S."/>
            <person name="Riethman H."/>
            <person name="Mudunuri U."/>
            <person name="Peterson J."/>
            <person name="Guyer M."/>
            <person name="Felsenfeld A."/>
            <person name="Old S."/>
            <person name="Mockrin S."/>
            <person name="Collins F.S."/>
        </authorList>
    </citation>
    <scope>NUCLEOTIDE SEQUENCE [LARGE SCALE GENOMIC DNA]</scope>
    <source>
        <strain>Brown Norway</strain>
    </source>
</reference>
<reference key="2">
    <citation type="journal article" date="2006" name="Mamm. Genome">
        <title>New members of the neurexin superfamily: multiple rodent homologues of the human CASPR5 gene.</title>
        <authorList>
            <person name="Traut W."/>
            <person name="Weichenhan D."/>
            <person name="Himmelbauer H."/>
            <person name="Winking H."/>
        </authorList>
    </citation>
    <scope>IDENTIFICATION</scope>
</reference>
<accession>Q0V8T6</accession>
<gene>
    <name type="primary">Cntnap5a</name>
    <name type="synonym">Caspr5-1</name>
</gene>
<feature type="signal peptide" evidence="2">
    <location>
        <begin position="1"/>
        <end position="24"/>
    </location>
</feature>
<feature type="chain" id="PRO_0000317381" description="Contactin-associated protein like 5-1">
    <location>
        <begin position="25"/>
        <end position="1305"/>
    </location>
</feature>
<feature type="transmembrane region" description="Helical" evidence="2">
    <location>
        <begin position="1238"/>
        <end position="1258"/>
    </location>
</feature>
<feature type="domain" description="F5/8 type C" evidence="4">
    <location>
        <begin position="25"/>
        <end position="174"/>
    </location>
</feature>
<feature type="domain" description="Laminin G-like 1" evidence="5">
    <location>
        <begin position="180"/>
        <end position="360"/>
    </location>
</feature>
<feature type="domain" description="Laminin G-like 2" evidence="5">
    <location>
        <begin position="367"/>
        <end position="544"/>
    </location>
</feature>
<feature type="domain" description="EGF-like 1" evidence="3">
    <location>
        <begin position="546"/>
        <end position="583"/>
    </location>
</feature>
<feature type="domain" description="Fibrinogen C-terminal" evidence="6">
    <location>
        <begin position="584"/>
        <end position="790"/>
    </location>
</feature>
<feature type="domain" description="Laminin G-like 3" evidence="5">
    <location>
        <begin position="791"/>
        <end position="956"/>
    </location>
</feature>
<feature type="domain" description="EGF-like 2" evidence="3">
    <location>
        <begin position="957"/>
        <end position="995"/>
    </location>
</feature>
<feature type="domain" description="Laminin G-like 4" evidence="5">
    <location>
        <begin position="1014"/>
        <end position="1198"/>
    </location>
</feature>
<feature type="glycosylation site" description="N-linked (GlcNAc...) asparagine" evidence="2">
    <location>
        <position position="282"/>
    </location>
</feature>
<feature type="glycosylation site" description="N-linked (GlcNAc...) asparagine" evidence="2">
    <location>
        <position position="496"/>
    </location>
</feature>
<feature type="glycosylation site" description="N-linked (GlcNAc...) asparagine" evidence="2">
    <location>
        <position position="571"/>
    </location>
</feature>
<feature type="glycosylation site" description="N-linked (GlcNAc...) asparagine" evidence="2">
    <location>
        <position position="622"/>
    </location>
</feature>
<feature type="glycosylation site" description="N-linked (GlcNAc...) asparagine" evidence="2">
    <location>
        <position position="1057"/>
    </location>
</feature>
<feature type="disulfide bond" evidence="1">
    <location>
        <begin position="329"/>
        <end position="360"/>
    </location>
</feature>
<feature type="disulfide bond" evidence="1">
    <location>
        <begin position="512"/>
        <end position="544"/>
    </location>
</feature>
<feature type="disulfide bond" evidence="1">
    <location>
        <begin position="550"/>
        <end position="561"/>
    </location>
</feature>
<feature type="disulfide bond" evidence="1">
    <location>
        <begin position="555"/>
        <end position="570"/>
    </location>
</feature>
<feature type="disulfide bond" evidence="1">
    <location>
        <begin position="572"/>
        <end position="582"/>
    </location>
</feature>
<feature type="disulfide bond" evidence="1">
    <location>
        <begin position="929"/>
        <end position="956"/>
    </location>
</feature>
<feature type="disulfide bond" evidence="1">
    <location>
        <begin position="960"/>
        <end position="973"/>
    </location>
</feature>
<feature type="disulfide bond" evidence="1">
    <location>
        <begin position="967"/>
        <end position="982"/>
    </location>
</feature>
<feature type="disulfide bond" evidence="1">
    <location>
        <begin position="984"/>
        <end position="994"/>
    </location>
</feature>
<feature type="disulfide bond" evidence="1">
    <location>
        <begin position="1163"/>
        <end position="1198"/>
    </location>
</feature>
<evidence type="ECO:0000250" key="1"/>
<evidence type="ECO:0000255" key="2"/>
<evidence type="ECO:0000255" key="3">
    <source>
        <dbReference type="PROSITE-ProRule" id="PRU00076"/>
    </source>
</evidence>
<evidence type="ECO:0000255" key="4">
    <source>
        <dbReference type="PROSITE-ProRule" id="PRU00081"/>
    </source>
</evidence>
<evidence type="ECO:0000255" key="5">
    <source>
        <dbReference type="PROSITE-ProRule" id="PRU00122"/>
    </source>
</evidence>
<evidence type="ECO:0000255" key="6">
    <source>
        <dbReference type="PROSITE-ProRule" id="PRU00739"/>
    </source>
</evidence>
<evidence type="ECO:0000305" key="7"/>
<dbReference type="EMBL" id="AABR03084638">
    <property type="status" value="NOT_ANNOTATED_CDS"/>
    <property type="molecule type" value="Genomic_DNA"/>
</dbReference>
<dbReference type="EMBL" id="AABR03084763">
    <property type="status" value="NOT_ANNOTATED_CDS"/>
    <property type="molecule type" value="Genomic_DNA"/>
</dbReference>
<dbReference type="EMBL" id="AABR03084792">
    <property type="status" value="NOT_ANNOTATED_CDS"/>
    <property type="molecule type" value="Genomic_DNA"/>
</dbReference>
<dbReference type="EMBL" id="AABR03084826">
    <property type="status" value="NOT_ANNOTATED_CDS"/>
    <property type="molecule type" value="Genomic_DNA"/>
</dbReference>
<dbReference type="EMBL" id="AABR03084916">
    <property type="status" value="NOT_ANNOTATED_CDS"/>
    <property type="molecule type" value="Genomic_DNA"/>
</dbReference>
<dbReference type="EMBL" id="AABR03085048">
    <property type="status" value="NOT_ANNOTATED_CDS"/>
    <property type="molecule type" value="Genomic_DNA"/>
</dbReference>
<dbReference type="EMBL" id="AABR03085225">
    <property type="status" value="NOT_ANNOTATED_CDS"/>
    <property type="molecule type" value="Genomic_DNA"/>
</dbReference>
<dbReference type="EMBL" id="AABR03085340">
    <property type="status" value="NOT_ANNOTATED_CDS"/>
    <property type="molecule type" value="Genomic_DNA"/>
</dbReference>
<dbReference type="EMBL" id="AABR03085455">
    <property type="status" value="NOT_ANNOTATED_CDS"/>
    <property type="molecule type" value="Genomic_DNA"/>
</dbReference>
<dbReference type="EMBL" id="AABR03085761">
    <property type="status" value="NOT_ANNOTATED_CDS"/>
    <property type="molecule type" value="Genomic_DNA"/>
</dbReference>
<dbReference type="EMBL" id="AABR03086666">
    <property type="status" value="NOT_ANNOTATED_CDS"/>
    <property type="molecule type" value="Genomic_DNA"/>
</dbReference>
<dbReference type="EMBL" id="BN000868">
    <property type="protein sequence ID" value="CAJ55730.1"/>
    <property type="molecule type" value="mRNA"/>
</dbReference>
<dbReference type="RefSeq" id="NP_001041330.1">
    <property type="nucleotide sequence ID" value="NM_001047865.2"/>
</dbReference>
<dbReference type="SMR" id="Q0V8T6"/>
<dbReference type="FunCoup" id="Q0V8T6">
    <property type="interactions" value="478"/>
</dbReference>
<dbReference type="GlyCosmos" id="Q0V8T6">
    <property type="glycosylation" value="5 sites, No reported glycans"/>
</dbReference>
<dbReference type="GlyGen" id="Q0V8T6">
    <property type="glycosylation" value="6 sites"/>
</dbReference>
<dbReference type="iPTMnet" id="Q0V8T6"/>
<dbReference type="PhosphoSitePlus" id="Q0V8T6"/>
<dbReference type="PaxDb" id="10116-ENSRNOP00000044412"/>
<dbReference type="Ensembl" id="ENSRNOT00000111316.1">
    <property type="protein sequence ID" value="ENSRNOP00000095092.1"/>
    <property type="gene ID" value="ENSRNOG00000070614.1"/>
</dbReference>
<dbReference type="GeneID" id="297832"/>
<dbReference type="KEGG" id="rno:297832"/>
<dbReference type="UCSC" id="RGD:1559812">
    <property type="organism name" value="rat"/>
</dbReference>
<dbReference type="AGR" id="RGD:1559812"/>
<dbReference type="CTD" id="636808"/>
<dbReference type="RGD" id="1559812">
    <property type="gene designation" value="Cntnap5a"/>
</dbReference>
<dbReference type="eggNOG" id="KOG3516">
    <property type="taxonomic scope" value="Eukaryota"/>
</dbReference>
<dbReference type="GeneTree" id="ENSGT00940000164023"/>
<dbReference type="InParanoid" id="Q0V8T6"/>
<dbReference type="OMA" id="GWNCGRE"/>
<dbReference type="PhylomeDB" id="Q0V8T6"/>
<dbReference type="PRO" id="PR:Q0V8T6"/>
<dbReference type="Proteomes" id="UP000002494">
    <property type="component" value="Chromosome 13"/>
</dbReference>
<dbReference type="GO" id="GO:0030054">
    <property type="term" value="C:cell junction"/>
    <property type="evidence" value="ECO:0007669"/>
    <property type="project" value="UniProtKB-ARBA"/>
</dbReference>
<dbReference type="GO" id="GO:0016020">
    <property type="term" value="C:membrane"/>
    <property type="evidence" value="ECO:0007669"/>
    <property type="project" value="UniProtKB-SubCell"/>
</dbReference>
<dbReference type="GO" id="GO:0007155">
    <property type="term" value="P:cell adhesion"/>
    <property type="evidence" value="ECO:0007669"/>
    <property type="project" value="UniProtKB-KW"/>
</dbReference>
<dbReference type="CDD" id="cd00054">
    <property type="entry name" value="EGF_CA"/>
    <property type="match status" value="2"/>
</dbReference>
<dbReference type="CDD" id="cd00057">
    <property type="entry name" value="FA58C"/>
    <property type="match status" value="1"/>
</dbReference>
<dbReference type="CDD" id="cd00110">
    <property type="entry name" value="LamG"/>
    <property type="match status" value="4"/>
</dbReference>
<dbReference type="FunFam" id="2.60.120.260:FF:000016">
    <property type="entry name" value="Contactin-associated protein-like 4 isoform 1"/>
    <property type="match status" value="1"/>
</dbReference>
<dbReference type="FunFam" id="2.60.120.200:FF:000026">
    <property type="entry name" value="contactin-associated protein-like 4 isoform X1"/>
    <property type="match status" value="1"/>
</dbReference>
<dbReference type="Gene3D" id="2.60.120.1000">
    <property type="match status" value="1"/>
</dbReference>
<dbReference type="Gene3D" id="2.60.120.200">
    <property type="match status" value="4"/>
</dbReference>
<dbReference type="Gene3D" id="2.60.120.260">
    <property type="entry name" value="Galactose-binding domain-like"/>
    <property type="match status" value="1"/>
</dbReference>
<dbReference type="Gene3D" id="2.10.25.10">
    <property type="entry name" value="Laminin"/>
    <property type="match status" value="2"/>
</dbReference>
<dbReference type="InterPro" id="IPR013320">
    <property type="entry name" value="ConA-like_dom_sf"/>
</dbReference>
<dbReference type="InterPro" id="IPR000742">
    <property type="entry name" value="EGF-like_dom"/>
</dbReference>
<dbReference type="InterPro" id="IPR000421">
    <property type="entry name" value="FA58C"/>
</dbReference>
<dbReference type="InterPro" id="IPR036056">
    <property type="entry name" value="Fibrinogen-like_C"/>
</dbReference>
<dbReference type="InterPro" id="IPR002181">
    <property type="entry name" value="Fibrinogen_a/b/g_C_dom"/>
</dbReference>
<dbReference type="InterPro" id="IPR008979">
    <property type="entry name" value="Galactose-bd-like_sf"/>
</dbReference>
<dbReference type="InterPro" id="IPR001791">
    <property type="entry name" value="Laminin_G"/>
</dbReference>
<dbReference type="InterPro" id="IPR050372">
    <property type="entry name" value="Neurexin-related_CASP"/>
</dbReference>
<dbReference type="PANTHER" id="PTHR15036:SF46">
    <property type="entry name" value="CONTACTIN-ASSOCIATED PROTEIN-LIKE 5"/>
    <property type="match status" value="1"/>
</dbReference>
<dbReference type="PANTHER" id="PTHR15036">
    <property type="entry name" value="PIKACHURIN-LIKE PROTEIN"/>
    <property type="match status" value="1"/>
</dbReference>
<dbReference type="Pfam" id="PF00008">
    <property type="entry name" value="EGF"/>
    <property type="match status" value="1"/>
</dbReference>
<dbReference type="Pfam" id="PF00754">
    <property type="entry name" value="F5_F8_type_C"/>
    <property type="match status" value="1"/>
</dbReference>
<dbReference type="Pfam" id="PF02210">
    <property type="entry name" value="Laminin_G_2"/>
    <property type="match status" value="4"/>
</dbReference>
<dbReference type="SMART" id="SM00181">
    <property type="entry name" value="EGF"/>
    <property type="match status" value="2"/>
</dbReference>
<dbReference type="SMART" id="SM00231">
    <property type="entry name" value="FA58C"/>
    <property type="match status" value="1"/>
</dbReference>
<dbReference type="SMART" id="SM00282">
    <property type="entry name" value="LamG"/>
    <property type="match status" value="4"/>
</dbReference>
<dbReference type="SUPFAM" id="SSF49899">
    <property type="entry name" value="Concanavalin A-like lectins/glucanases"/>
    <property type="match status" value="4"/>
</dbReference>
<dbReference type="SUPFAM" id="SSF57196">
    <property type="entry name" value="EGF/Laminin"/>
    <property type="match status" value="1"/>
</dbReference>
<dbReference type="SUPFAM" id="SSF56496">
    <property type="entry name" value="Fibrinogen C-terminal domain-like"/>
    <property type="match status" value="1"/>
</dbReference>
<dbReference type="SUPFAM" id="SSF49785">
    <property type="entry name" value="Galactose-binding domain-like"/>
    <property type="match status" value="1"/>
</dbReference>
<dbReference type="PROSITE" id="PS50026">
    <property type="entry name" value="EGF_3"/>
    <property type="match status" value="2"/>
</dbReference>
<dbReference type="PROSITE" id="PS01285">
    <property type="entry name" value="FA58C_1"/>
    <property type="match status" value="1"/>
</dbReference>
<dbReference type="PROSITE" id="PS50022">
    <property type="entry name" value="FA58C_3"/>
    <property type="match status" value="1"/>
</dbReference>
<dbReference type="PROSITE" id="PS51406">
    <property type="entry name" value="FIBRINOGEN_C_2"/>
    <property type="match status" value="1"/>
</dbReference>
<dbReference type="PROSITE" id="PS50025">
    <property type="entry name" value="LAM_G_DOMAIN"/>
    <property type="match status" value="4"/>
</dbReference>
<name>CTP5A_RAT</name>
<keyword id="KW-0130">Cell adhesion</keyword>
<keyword id="KW-1015">Disulfide bond</keyword>
<keyword id="KW-0245">EGF-like domain</keyword>
<keyword id="KW-0325">Glycoprotein</keyword>
<keyword id="KW-0472">Membrane</keyword>
<keyword id="KW-1185">Reference proteome</keyword>
<keyword id="KW-0677">Repeat</keyword>
<keyword id="KW-0732">Signal</keyword>
<keyword id="KW-0812">Transmembrane</keyword>
<keyword id="KW-1133">Transmembrane helix</keyword>
<proteinExistence type="evidence at transcript level"/>
<organism>
    <name type="scientific">Rattus norvegicus</name>
    <name type="common">Rat</name>
    <dbReference type="NCBI Taxonomy" id="10116"/>
    <lineage>
        <taxon>Eukaryota</taxon>
        <taxon>Metazoa</taxon>
        <taxon>Chordata</taxon>
        <taxon>Craniata</taxon>
        <taxon>Vertebrata</taxon>
        <taxon>Euteleostomi</taxon>
        <taxon>Mammalia</taxon>
        <taxon>Eutheria</taxon>
        <taxon>Euarchontoglires</taxon>
        <taxon>Glires</taxon>
        <taxon>Rodentia</taxon>
        <taxon>Myomorpha</taxon>
        <taxon>Muroidea</taxon>
        <taxon>Muridae</taxon>
        <taxon>Murinae</taxon>
        <taxon>Rattus</taxon>
    </lineage>
</organism>
<protein>
    <recommendedName>
        <fullName>Contactin-associated protein like 5-1</fullName>
    </recommendedName>
    <alternativeName>
        <fullName>Cell recognition molecule Caspr5-1</fullName>
    </alternativeName>
    <alternativeName>
        <fullName>Cell recognition molecule Caspr5a</fullName>
    </alternativeName>
    <alternativeName>
        <fullName>Contactin-associated protein-like 5a</fullName>
    </alternativeName>
</protein>
<comment type="function">
    <text>May play a role in the correct development and proper functioning of the peripheral and central nervous system and be involved in cell adhesion and intercellular communication.</text>
</comment>
<comment type="subcellular location">
    <subcellularLocation>
        <location evidence="7">Membrane</location>
        <topology evidence="7">Single-pass type I membrane protein</topology>
    </subcellularLocation>
</comment>
<comment type="similarity">
    <text evidence="7">Belongs to the neurexin family.</text>
</comment>
<sequence>MDSLQRLNGLLTLVLSALWHLGLTASNYNCDDPLASFFSPMTFSSSLDLTGSYSSAQLNWKMGTGGWSPVDSNAQQWLQIDLGNRVEITAVATQGRYGSSDWVTSYRLMFSDTGHNWQHYTQEDSIWTFVGNMNADSVVHHRLLHSMRARFVRFVPLEWNPNGKIGMRVEAYGCSYRSDVADFDGRSTLLYRFNQKTMSTLKDVISLKFKSMQGDGVLFHGEGQRGDHVTLELQKGRLALYLNLDDSKARLSSTVPLVIMGSLLDDQHWHSVLLERVGKQANFTVDMNTQHFQTKGETDALDIDYELSFGGIPVPSKPGTFVKKNFHGCMENLYYNGVNIIDLAKRRKHQIYSGNVTFSCSEPQIVPITFVNSRSSYLMLPGTPQIDGLSVSFQFRTWNEDGLLLSTELSEGSGTLLLILEGGTLRLLIKKVAGHGTEIKTGSGLNDGLWHSVSINARRNRVTLTLDNDAASPAPETSRKQIYSGKSYYFGGCPDNLTDSQCLNPIKAFQGCMRLIFIDNQPKDLISVQQGSLGNFSDLHIDLCSIKDRCLPNYCEHGGHCAQTWTTFYCNCSDTGYTGATCHDSIYEQSCEVYRHKGHTAGFFYVDSDGSGPLGPLQVYCNITEDKIWMTVQHNNTELTRVQGSSPEKPYSMTLNYGGSMEQLEALIDGSEYCEQELKYHCRRSRLLNTLDGTPFTWWIGRSNERHPYWEGSVPGVQQCGCGLEESCLDNAYFCNCDADMDEWSNNTGLFSLKDHLPVTHVIITDTNRSNSEAAWRIGPLRCNGDRHFWNAVSFSTEASYLHFPTFHAEFSADISFFFKTTALSGVFLENLGIKDFLRLEMSSPSEVTFTIDVGNGPVELLVQSPYPLNDNQWHYIRAERNVKETSLQVDNLPLSLREASEEAYFRLHLTSQLFVGGTSSRQKGFLGCMRSLHLNGQNTDLIERAKLMSGVTPGCPGHCSSYSSNCHNGGKCVEKQSGYSCDCTNSPNEGPFCQKEISALFDPGTSVTYMFQEPYLVIKNTSLLSSPIYTDTARSKETIMLNFLTAQAPTILLYLNFSSQKFLAILLSSNGSLQIRFRLSKGESHVYTMSTENLANGRVHQVKISKDGPEISIQMDQQLFSYNFSTKVEFWTLKSLVLGKVTETLGLDPEVAKVNILGFLGCLSSVQYNHIAPLKAALRHAGVAPVTVHGTLTESGCDSTLDSDVNAVTTVHSSLEPIGKRDEQEPLTNTVQSDSAVIGGIIAVVTFVTFCVIGIMICFLYQHKQSHRTNQTKEKEYPETLSNSFRNVIDLQNTASECKREYFI</sequence>